<feature type="chain" id="PRO_0000288828" description="Protein espinas">
    <location>
        <begin position="1"/>
        <end position="795"/>
    </location>
</feature>
<feature type="domain" description="PET" evidence="3">
    <location>
        <begin position="135"/>
        <end position="243"/>
    </location>
</feature>
<feature type="domain" description="LIM zinc-binding 1" evidence="2">
    <location>
        <begin position="242"/>
        <end position="306"/>
    </location>
</feature>
<feature type="domain" description="LIM zinc-binding 2" evidence="2">
    <location>
        <begin position="307"/>
        <end position="367"/>
    </location>
</feature>
<feature type="domain" description="LIM zinc-binding 3" evidence="2">
    <location>
        <begin position="368"/>
        <end position="430"/>
    </location>
</feature>
<feature type="region of interest" description="Disordered" evidence="4">
    <location>
        <begin position="30"/>
        <end position="96"/>
    </location>
</feature>
<feature type="region of interest" description="Disordered" evidence="4">
    <location>
        <begin position="427"/>
        <end position="487"/>
    </location>
</feature>
<feature type="region of interest" description="Disordered" evidence="4">
    <location>
        <begin position="616"/>
        <end position="684"/>
    </location>
</feature>
<feature type="compositionally biased region" description="Low complexity" evidence="4">
    <location>
        <begin position="52"/>
        <end position="66"/>
    </location>
</feature>
<feature type="compositionally biased region" description="Basic and acidic residues" evidence="4">
    <location>
        <begin position="459"/>
        <end position="471"/>
    </location>
</feature>
<feature type="compositionally biased region" description="Basic and acidic residues" evidence="4">
    <location>
        <begin position="637"/>
        <end position="649"/>
    </location>
</feature>
<feature type="compositionally biased region" description="Polar residues" evidence="4">
    <location>
        <begin position="650"/>
        <end position="662"/>
    </location>
</feature>
<feature type="compositionally biased region" description="Basic residues" evidence="4">
    <location>
        <begin position="666"/>
        <end position="675"/>
    </location>
</feature>
<protein>
    <recommendedName>
        <fullName>Protein espinas</fullName>
    </recommendedName>
</protein>
<dbReference type="EMBL" id="CM000071">
    <property type="protein sequence ID" value="EAL24766.1"/>
    <property type="status" value="ALT_SEQ"/>
    <property type="molecule type" value="Genomic_DNA"/>
</dbReference>
<dbReference type="SMR" id="Q292U5"/>
<dbReference type="FunCoup" id="Q292U5">
    <property type="interactions" value="89"/>
</dbReference>
<dbReference type="STRING" id="46245.Q292U5"/>
<dbReference type="eggNOG" id="KOG1704">
    <property type="taxonomic scope" value="Eukaryota"/>
</dbReference>
<dbReference type="HOGENOM" id="CLU_008937_4_0_1"/>
<dbReference type="InParanoid" id="Q292U5"/>
<dbReference type="OMA" id="RRSSHKM"/>
<dbReference type="PhylomeDB" id="Q292U5"/>
<dbReference type="ChiTaRS" id="esn">
    <property type="organism name" value="fly"/>
</dbReference>
<dbReference type="Proteomes" id="UP000001819">
    <property type="component" value="Unplaced"/>
</dbReference>
<dbReference type="GO" id="GO:0008270">
    <property type="term" value="F:zinc ion binding"/>
    <property type="evidence" value="ECO:0007669"/>
    <property type="project" value="InterPro"/>
</dbReference>
<dbReference type="CDD" id="cd09415">
    <property type="entry name" value="LIM1_Prickle"/>
    <property type="match status" value="1"/>
</dbReference>
<dbReference type="CDD" id="cd09418">
    <property type="entry name" value="LIM2_Prickle"/>
    <property type="match status" value="1"/>
</dbReference>
<dbReference type="CDD" id="cd09420">
    <property type="entry name" value="LIM3_Prickle"/>
    <property type="match status" value="1"/>
</dbReference>
<dbReference type="CDD" id="cd09827">
    <property type="entry name" value="PET_Prickle"/>
    <property type="match status" value="1"/>
</dbReference>
<dbReference type="FunFam" id="2.10.110.10:FF:000022">
    <property type="entry name" value="prickle-like protein 2 isoform X1"/>
    <property type="match status" value="1"/>
</dbReference>
<dbReference type="FunFam" id="2.10.110.10:FF:000035">
    <property type="entry name" value="prickle-like protein 2 isoform X1"/>
    <property type="match status" value="1"/>
</dbReference>
<dbReference type="FunFam" id="2.10.110.10:FF:000005">
    <property type="entry name" value="Testin isoform 1"/>
    <property type="match status" value="1"/>
</dbReference>
<dbReference type="Gene3D" id="2.10.110.10">
    <property type="entry name" value="Cysteine Rich Protein"/>
    <property type="match status" value="3"/>
</dbReference>
<dbReference type="InterPro" id="IPR033725">
    <property type="entry name" value="LIM1_prickle"/>
</dbReference>
<dbReference type="InterPro" id="IPR033726">
    <property type="entry name" value="LIM2_prickle"/>
</dbReference>
<dbReference type="InterPro" id="IPR033727">
    <property type="entry name" value="LIM3_prickle"/>
</dbReference>
<dbReference type="InterPro" id="IPR010442">
    <property type="entry name" value="PET_domain"/>
</dbReference>
<dbReference type="InterPro" id="IPR033723">
    <property type="entry name" value="PET_prickle"/>
</dbReference>
<dbReference type="InterPro" id="IPR047120">
    <property type="entry name" value="Pk/Esn/Tes"/>
</dbReference>
<dbReference type="InterPro" id="IPR001781">
    <property type="entry name" value="Znf_LIM"/>
</dbReference>
<dbReference type="PANTHER" id="PTHR24211">
    <property type="entry name" value="LIM DOMAIN-CONTAINING PROTEIN"/>
    <property type="match status" value="1"/>
</dbReference>
<dbReference type="PANTHER" id="PTHR24211:SF20">
    <property type="entry name" value="PROTEIN ESPINAS-RELATED"/>
    <property type="match status" value="1"/>
</dbReference>
<dbReference type="Pfam" id="PF00412">
    <property type="entry name" value="LIM"/>
    <property type="match status" value="2"/>
</dbReference>
<dbReference type="Pfam" id="PF06297">
    <property type="entry name" value="PET"/>
    <property type="match status" value="1"/>
</dbReference>
<dbReference type="SMART" id="SM00132">
    <property type="entry name" value="LIM"/>
    <property type="match status" value="3"/>
</dbReference>
<dbReference type="SUPFAM" id="SSF57716">
    <property type="entry name" value="Glucocorticoid receptor-like (DNA-binding domain)"/>
    <property type="match status" value="2"/>
</dbReference>
<dbReference type="PROSITE" id="PS00478">
    <property type="entry name" value="LIM_DOMAIN_1"/>
    <property type="match status" value="2"/>
</dbReference>
<dbReference type="PROSITE" id="PS50023">
    <property type="entry name" value="LIM_DOMAIN_2"/>
    <property type="match status" value="3"/>
</dbReference>
<dbReference type="PROSITE" id="PS51303">
    <property type="entry name" value="PET"/>
    <property type="match status" value="1"/>
</dbReference>
<name>ESN_DROPS</name>
<reference evidence="6" key="1">
    <citation type="journal article" date="2005" name="Genome Res.">
        <title>Comparative genome sequencing of Drosophila pseudoobscura: chromosomal, gene, and cis-element evolution.</title>
        <authorList>
            <person name="Richards S."/>
            <person name="Liu Y."/>
            <person name="Bettencourt B.R."/>
            <person name="Hradecky P."/>
            <person name="Letovsky S."/>
            <person name="Nielsen R."/>
            <person name="Thornton K."/>
            <person name="Hubisz M.J."/>
            <person name="Chen R."/>
            <person name="Meisel R.P."/>
            <person name="Couronne O."/>
            <person name="Hua S."/>
            <person name="Smith M.A."/>
            <person name="Zhang P."/>
            <person name="Liu J."/>
            <person name="Bussemaker H.J."/>
            <person name="van Batenburg M.F."/>
            <person name="Howells S.L."/>
            <person name="Scherer S.E."/>
            <person name="Sodergren E."/>
            <person name="Matthews B.B."/>
            <person name="Crosby M.A."/>
            <person name="Schroeder A.J."/>
            <person name="Ortiz-Barrientos D."/>
            <person name="Rives C.M."/>
            <person name="Metzker M.L."/>
            <person name="Muzny D.M."/>
            <person name="Scott G."/>
            <person name="Steffen D."/>
            <person name="Wheeler D.A."/>
            <person name="Worley K.C."/>
            <person name="Havlak P."/>
            <person name="Durbin K.J."/>
            <person name="Egan A."/>
            <person name="Gill R."/>
            <person name="Hume J."/>
            <person name="Morgan M.B."/>
            <person name="Miner G."/>
            <person name="Hamilton C."/>
            <person name="Huang Y."/>
            <person name="Waldron L."/>
            <person name="Verduzco D."/>
            <person name="Clerc-Blankenburg K.P."/>
            <person name="Dubchak I."/>
            <person name="Noor M.A.F."/>
            <person name="Anderson W."/>
            <person name="White K.P."/>
            <person name="Clark A.G."/>
            <person name="Schaeffer S.W."/>
            <person name="Gelbart W.M."/>
            <person name="Weinstock G.M."/>
            <person name="Gibbs R.A."/>
        </authorList>
    </citation>
    <scope>NUCLEOTIDE SEQUENCE [LARGE SCALE GENOMIC DNA]</scope>
    <source>
        <strain>MV2-25 / Tucson 14011-0121.94</strain>
    </source>
</reference>
<evidence type="ECO:0000250" key="1">
    <source>
        <dbReference type="UniProtKB" id="Q9U1I1"/>
    </source>
</evidence>
<evidence type="ECO:0000255" key="2">
    <source>
        <dbReference type="PROSITE-ProRule" id="PRU00125"/>
    </source>
</evidence>
<evidence type="ECO:0000255" key="3">
    <source>
        <dbReference type="PROSITE-ProRule" id="PRU00636"/>
    </source>
</evidence>
<evidence type="ECO:0000256" key="4">
    <source>
        <dbReference type="SAM" id="MobiDB-lite"/>
    </source>
</evidence>
<evidence type="ECO:0000305" key="5"/>
<evidence type="ECO:0000312" key="6">
    <source>
        <dbReference type="EMBL" id="EAL24766.1"/>
    </source>
</evidence>
<organism>
    <name type="scientific">Drosophila pseudoobscura pseudoobscura</name>
    <name type="common">Fruit fly</name>
    <dbReference type="NCBI Taxonomy" id="46245"/>
    <lineage>
        <taxon>Eukaryota</taxon>
        <taxon>Metazoa</taxon>
        <taxon>Ecdysozoa</taxon>
        <taxon>Arthropoda</taxon>
        <taxon>Hexapoda</taxon>
        <taxon>Insecta</taxon>
        <taxon>Pterygota</taxon>
        <taxon>Neoptera</taxon>
        <taxon>Endopterygota</taxon>
        <taxon>Diptera</taxon>
        <taxon>Brachycera</taxon>
        <taxon>Muscomorpha</taxon>
        <taxon>Ephydroidea</taxon>
        <taxon>Drosophilidae</taxon>
        <taxon>Drosophila</taxon>
        <taxon>Sophophora</taxon>
    </lineage>
</organism>
<accession>Q292U5</accession>
<sequence length="795" mass="87704">MQQQPQPQPLPHSSYYTQTESELLQIEAGGTGLTFPPHRSEMAATSSQLQQASMSSNVASTATSSNLDVPSGGSTGSGSGGQTTSHFVSPLQRRHCQPPSHLPLNSVASPLRTASYKTAAAVAGHGFHHSHHQQLDFQRNSQSDDDSGCALEEYTWVPPGLRPDQVRLYFSQLPDDKVPYVNSPGEKYRVKQLLHQLPPQDNEVRYCHSLSDEERKELRIFSAQRKREALGRGAVRLLSDERPCKGCEESLSGGDIVVFAQRLGAQLCWHPGCFVCSVCKELLVDLIYFQRDGNLYCGRHHAETQKPRCSACDEIIFSDECTEAEGRTWHMKHFACQECEHQLGGQRYIMREGKPYCLGCFDTMFAEYCDYCGEVIGVDQGQMSHDGQHWHATDQCFSCCTCRCSLLGRPFLPRRGTIYCSIACSKGEPPTPSDTSSGPQLRPTHRASTSSQIARSPRRSGDRDRERESSRKANHGHGPVKGTGSAGDLLERQERKRMEAAGVADLLLGGGVPGMPRPAHPPPIDLTELGISLDNICAGDKSIFGDSQLTSSMPDMLLSKAEDSHSYQSIDKINLNSPSNSDLTQSTQELANELELDNDPVRELPHDGYEQLFANNRNTKKGHELQDMQGEEDGEQLDNRPLKEVRFHSVQDTMSRSKSYTDNSNARRRRRRRNQSRSSSEMQINQTNLRLHNAQTQAGTGTGAHNLLNNLDNCDVASICSTCSSSSSSDMDDYVYRLPARKHYGGVRVAYVPNDALAYERKKKLAQDPSLAAAASAAVPGVPGVMNESKNCTIS</sequence>
<proteinExistence type="inferred from homology"/>
<keyword id="KW-0440">LIM domain</keyword>
<keyword id="KW-0479">Metal-binding</keyword>
<keyword id="KW-1185">Reference proteome</keyword>
<keyword id="KW-0677">Repeat</keyword>
<keyword id="KW-0862">Zinc</keyword>
<gene>
    <name evidence="1" type="primary">esn</name>
    <name type="ORF">GA11840</name>
</gene>
<comment type="similarity">
    <text evidence="5">Belongs to the prickle / espinas / testin family.</text>
</comment>
<comment type="sequence caution" evidence="5">
    <conflict type="erroneous gene model prediction">
        <sequence resource="EMBL-CDS" id="EAL24766"/>
    </conflict>
</comment>